<proteinExistence type="inferred from homology"/>
<organism>
    <name type="scientific">Staphylococcus aureus (strain COL)</name>
    <dbReference type="NCBI Taxonomy" id="93062"/>
    <lineage>
        <taxon>Bacteria</taxon>
        <taxon>Bacillati</taxon>
        <taxon>Bacillota</taxon>
        <taxon>Bacilli</taxon>
        <taxon>Bacillales</taxon>
        <taxon>Staphylococcaceae</taxon>
        <taxon>Staphylococcus</taxon>
    </lineage>
</organism>
<keyword id="KW-0963">Cytoplasm</keyword>
<keyword id="KW-0378">Hydrolase</keyword>
<dbReference type="EC" id="3.5.1.5" evidence="1"/>
<dbReference type="EMBL" id="CP000046">
    <property type="protein sequence ID" value="AAW38501.1"/>
    <property type="molecule type" value="Genomic_DNA"/>
</dbReference>
<dbReference type="RefSeq" id="WP_000612128.1">
    <property type="nucleotide sequence ID" value="NZ_JBGOFO010000004.1"/>
</dbReference>
<dbReference type="SMR" id="Q5HDR9"/>
<dbReference type="KEGG" id="sac:SACOL2281"/>
<dbReference type="HOGENOM" id="CLU_129707_2_2_9"/>
<dbReference type="UniPathway" id="UPA00258">
    <property type="reaction ID" value="UER00370"/>
</dbReference>
<dbReference type="Proteomes" id="UP000000530">
    <property type="component" value="Chromosome"/>
</dbReference>
<dbReference type="GO" id="GO:0035550">
    <property type="term" value="C:urease complex"/>
    <property type="evidence" value="ECO:0007669"/>
    <property type="project" value="InterPro"/>
</dbReference>
<dbReference type="GO" id="GO:0009039">
    <property type="term" value="F:urease activity"/>
    <property type="evidence" value="ECO:0007669"/>
    <property type="project" value="UniProtKB-UniRule"/>
</dbReference>
<dbReference type="GO" id="GO:0043419">
    <property type="term" value="P:urea catabolic process"/>
    <property type="evidence" value="ECO:0007669"/>
    <property type="project" value="UniProtKB-UniRule"/>
</dbReference>
<dbReference type="CDD" id="cd00407">
    <property type="entry name" value="Urease_beta"/>
    <property type="match status" value="1"/>
</dbReference>
<dbReference type="FunFam" id="2.10.150.10:FF:000001">
    <property type="entry name" value="Urease subunit beta"/>
    <property type="match status" value="1"/>
</dbReference>
<dbReference type="Gene3D" id="2.10.150.10">
    <property type="entry name" value="Urease, beta subunit"/>
    <property type="match status" value="1"/>
</dbReference>
<dbReference type="HAMAP" id="MF_01954">
    <property type="entry name" value="Urease_beta"/>
    <property type="match status" value="1"/>
</dbReference>
<dbReference type="InterPro" id="IPR002019">
    <property type="entry name" value="Urease_beta-like"/>
</dbReference>
<dbReference type="InterPro" id="IPR036461">
    <property type="entry name" value="Urease_betasu_sf"/>
</dbReference>
<dbReference type="InterPro" id="IPR050069">
    <property type="entry name" value="Urease_subunit"/>
</dbReference>
<dbReference type="NCBIfam" id="NF009682">
    <property type="entry name" value="PRK13203.1"/>
    <property type="match status" value="1"/>
</dbReference>
<dbReference type="NCBIfam" id="TIGR00192">
    <property type="entry name" value="urease_beta"/>
    <property type="match status" value="1"/>
</dbReference>
<dbReference type="PANTHER" id="PTHR33569">
    <property type="entry name" value="UREASE"/>
    <property type="match status" value="1"/>
</dbReference>
<dbReference type="PANTHER" id="PTHR33569:SF1">
    <property type="entry name" value="UREASE"/>
    <property type="match status" value="1"/>
</dbReference>
<dbReference type="Pfam" id="PF00699">
    <property type="entry name" value="Urease_beta"/>
    <property type="match status" value="1"/>
</dbReference>
<dbReference type="SUPFAM" id="SSF51278">
    <property type="entry name" value="Urease, beta-subunit"/>
    <property type="match status" value="1"/>
</dbReference>
<sequence>MIPGEIITKSTEVEINNHHPETVIEVENTGDRPIQVGSHFHFYEANAALDFEREMAYGKHLDIPAGAAVRFEPGDKKEVQLVEYAGKRKIFGFRGMVNGPIDESRVYRPTDENDEYAGVFGDNGAENVNKKGGKRS</sequence>
<protein>
    <recommendedName>
        <fullName evidence="1">Urease subunit beta</fullName>
        <ecNumber evidence="1">3.5.1.5</ecNumber>
    </recommendedName>
    <alternativeName>
        <fullName evidence="1">Urea amidohydrolase subunit beta</fullName>
    </alternativeName>
</protein>
<feature type="chain" id="PRO_0000067587" description="Urease subunit beta">
    <location>
        <begin position="1"/>
        <end position="136"/>
    </location>
</feature>
<feature type="region of interest" description="Disordered" evidence="2">
    <location>
        <begin position="113"/>
        <end position="136"/>
    </location>
</feature>
<evidence type="ECO:0000255" key="1">
    <source>
        <dbReference type="HAMAP-Rule" id="MF_01954"/>
    </source>
</evidence>
<evidence type="ECO:0000256" key="2">
    <source>
        <dbReference type="SAM" id="MobiDB-lite"/>
    </source>
</evidence>
<reference key="1">
    <citation type="journal article" date="2005" name="J. Bacteriol.">
        <title>Insights on evolution of virulence and resistance from the complete genome analysis of an early methicillin-resistant Staphylococcus aureus strain and a biofilm-producing methicillin-resistant Staphylococcus epidermidis strain.</title>
        <authorList>
            <person name="Gill S.R."/>
            <person name="Fouts D.E."/>
            <person name="Archer G.L."/>
            <person name="Mongodin E.F."/>
            <person name="DeBoy R.T."/>
            <person name="Ravel J."/>
            <person name="Paulsen I.T."/>
            <person name="Kolonay J.F."/>
            <person name="Brinkac L.M."/>
            <person name="Beanan M.J."/>
            <person name="Dodson R.J."/>
            <person name="Daugherty S.C."/>
            <person name="Madupu R."/>
            <person name="Angiuoli S.V."/>
            <person name="Durkin A.S."/>
            <person name="Haft D.H."/>
            <person name="Vamathevan J.J."/>
            <person name="Khouri H."/>
            <person name="Utterback T.R."/>
            <person name="Lee C."/>
            <person name="Dimitrov G."/>
            <person name="Jiang L."/>
            <person name="Qin H."/>
            <person name="Weidman J."/>
            <person name="Tran K."/>
            <person name="Kang K.H."/>
            <person name="Hance I.R."/>
            <person name="Nelson K.E."/>
            <person name="Fraser C.M."/>
        </authorList>
    </citation>
    <scope>NUCLEOTIDE SEQUENCE [LARGE SCALE GENOMIC DNA]</scope>
    <source>
        <strain>COL</strain>
    </source>
</reference>
<gene>
    <name evidence="1" type="primary">ureB</name>
    <name type="ordered locus">SACOL2281</name>
</gene>
<accession>Q5HDR9</accession>
<comment type="catalytic activity">
    <reaction evidence="1">
        <text>urea + 2 H2O + H(+) = hydrogencarbonate + 2 NH4(+)</text>
        <dbReference type="Rhea" id="RHEA:20557"/>
        <dbReference type="ChEBI" id="CHEBI:15377"/>
        <dbReference type="ChEBI" id="CHEBI:15378"/>
        <dbReference type="ChEBI" id="CHEBI:16199"/>
        <dbReference type="ChEBI" id="CHEBI:17544"/>
        <dbReference type="ChEBI" id="CHEBI:28938"/>
        <dbReference type="EC" id="3.5.1.5"/>
    </reaction>
</comment>
<comment type="pathway">
    <text evidence="1">Nitrogen metabolism; urea degradation; CO(2) and NH(3) from urea (urease route): step 1/1.</text>
</comment>
<comment type="subunit">
    <text evidence="1">Heterotrimer of UreA (gamma), UreB (beta) and UreC (alpha) subunits. Three heterotrimers associate to form the active enzyme.</text>
</comment>
<comment type="subcellular location">
    <subcellularLocation>
        <location evidence="1">Cytoplasm</location>
    </subcellularLocation>
</comment>
<comment type="similarity">
    <text evidence="1">Belongs to the urease beta subunit family.</text>
</comment>
<name>URE2_STAAC</name>